<feature type="chain" id="PRO_0000212876" description="Palmitoyltransferase ZDHHC7">
    <location>
        <begin position="1"/>
        <end position="308"/>
    </location>
</feature>
<feature type="topological domain" description="Cytoplasmic" evidence="8">
    <location>
        <begin position="1"/>
        <end position="50"/>
    </location>
</feature>
<feature type="transmembrane region" description="Helical" evidence="4">
    <location>
        <begin position="51"/>
        <end position="71"/>
    </location>
</feature>
<feature type="topological domain" description="Lumenal" evidence="8">
    <location>
        <begin position="72"/>
        <end position="75"/>
    </location>
</feature>
<feature type="transmembrane region" description="Helical" evidence="4">
    <location>
        <begin position="76"/>
        <end position="96"/>
    </location>
</feature>
<feature type="topological domain" description="Cytoplasmic" evidence="8">
    <location>
        <begin position="97"/>
        <end position="173"/>
    </location>
</feature>
<feature type="transmembrane region" description="Helical" evidence="4">
    <location>
        <begin position="174"/>
        <end position="194"/>
    </location>
</feature>
<feature type="topological domain" description="Lumenal" evidence="8">
    <location>
        <begin position="195"/>
        <end position="217"/>
    </location>
</feature>
<feature type="transmembrane region" description="Helical" evidence="4">
    <location>
        <begin position="218"/>
        <end position="238"/>
    </location>
</feature>
<feature type="topological domain" description="Cytoplasmic" evidence="8">
    <location>
        <begin position="239"/>
        <end position="308"/>
    </location>
</feature>
<feature type="domain" description="DHHC" evidence="5">
    <location>
        <begin position="130"/>
        <end position="180"/>
    </location>
</feature>
<feature type="active site" description="S-palmitoyl cysteine intermediate" evidence="5">
    <location>
        <position position="160"/>
    </location>
</feature>
<reference key="1">
    <citation type="journal article" date="2002" name="Endocrinology">
        <title>Identification of a novel gene product, Sertoli cell gene with a zinc finger domain, that is important for FSH activation of testicular Sertoli cells.</title>
        <authorList>
            <person name="Chaudhary J."/>
            <person name="Skinner M.K."/>
        </authorList>
    </citation>
    <scope>NUCLEOTIDE SEQUENCE [MRNA]</scope>
    <scope>FUNCTION</scope>
    <scope>TISSUE SPECIFICITY</scope>
</reference>
<reference key="2">
    <citation type="submission" date="2005-01" db="EMBL/GenBank/DDBJ databases">
        <title>A superfamily of membrane-associated DHHC type zinc finger proteins.</title>
        <authorList>
            <person name="Huang C.-H."/>
            <person name="Chen Y."/>
            <person name="Ye T."/>
        </authorList>
    </citation>
    <scope>NUCLEOTIDE SEQUENCE [MRNA]</scope>
</reference>
<reference key="3">
    <citation type="journal article" date="2004" name="Genome Res.">
        <title>The status, quality, and expansion of the NIH full-length cDNA project: the Mammalian Gene Collection (MGC).</title>
        <authorList>
            <consortium name="The MGC Project Team"/>
        </authorList>
    </citation>
    <scope>NUCLEOTIDE SEQUENCE [LARGE SCALE MRNA]</scope>
    <source>
        <tissue>Prostate</tissue>
    </source>
</reference>
<sequence>MQPSGHRLRDIEHHPLLTDNDNYDSASSSSSEADMADRVWFIRDGCGMVCAVMTWLLVVYADFVVTFVMLLPSKDFWYSVVNGVLFNCLAVLALSSHLRTMLTDPGAVPKGNATKEYMESLQLKPGEVIYKCPKCCCIKPERAHHCSICKRCIRKMDHHCPWVNNCVGEKNQRFFVLFTMYIALSSIHALILCGLQFISCVRGQWTECSDFSPPITVILLVFLCLEGLLFFTFTAVMFGTQIHSICNDETEIERLKSEKPTWERRLRWEGMKSVFGGPPSLLWMNPFVGFRFRRLQMRTRKGGPEFSV</sequence>
<gene>
    <name evidence="10" type="primary">Zdhhc7</name>
    <name evidence="7" type="synonym">Serz</name>
</gene>
<dbReference type="EC" id="2.3.1.225" evidence="2"/>
<dbReference type="EC" id="2.3.1.-" evidence="2"/>
<dbReference type="EMBL" id="AY040615">
    <property type="protein sequence ID" value="AAK91508.1"/>
    <property type="molecule type" value="mRNA"/>
</dbReference>
<dbReference type="EMBL" id="AY886525">
    <property type="protein sequence ID" value="AAX73387.1"/>
    <property type="molecule type" value="mRNA"/>
</dbReference>
<dbReference type="EMBL" id="BC061769">
    <property type="protein sequence ID" value="AAH61769.1"/>
    <property type="molecule type" value="mRNA"/>
</dbReference>
<dbReference type="RefSeq" id="NP_596885.1">
    <property type="nucleotide sequence ID" value="NM_133394.2"/>
</dbReference>
<dbReference type="RefSeq" id="XP_038953366.1">
    <property type="nucleotide sequence ID" value="XM_039097438.2"/>
</dbReference>
<dbReference type="RefSeq" id="XP_063133814.1">
    <property type="nucleotide sequence ID" value="XM_063277744.1"/>
</dbReference>
<dbReference type="SMR" id="Q923G5"/>
<dbReference type="FunCoup" id="Q923G5">
    <property type="interactions" value="2566"/>
</dbReference>
<dbReference type="STRING" id="10116.ENSRNOP00000023405"/>
<dbReference type="PhosphoSitePlus" id="Q923G5"/>
<dbReference type="PaxDb" id="10116-ENSRNOP00000023405"/>
<dbReference type="Ensembl" id="ENSRNOT00000023405.4">
    <property type="protein sequence ID" value="ENSRNOP00000023405.2"/>
    <property type="gene ID" value="ENSRNOG00000017342.4"/>
</dbReference>
<dbReference type="GeneID" id="170906"/>
<dbReference type="KEGG" id="rno:170906"/>
<dbReference type="UCSC" id="RGD:620205">
    <property type="organism name" value="rat"/>
</dbReference>
<dbReference type="AGR" id="RGD:620205"/>
<dbReference type="CTD" id="55625"/>
<dbReference type="RGD" id="620205">
    <property type="gene designation" value="Zdhhc7"/>
</dbReference>
<dbReference type="eggNOG" id="KOG1311">
    <property type="taxonomic scope" value="Eukaryota"/>
</dbReference>
<dbReference type="GeneTree" id="ENSGT00940000156519"/>
<dbReference type="HOGENOM" id="CLU_048061_1_1_1"/>
<dbReference type="InParanoid" id="Q923G5"/>
<dbReference type="OMA" id="WYSMING"/>
<dbReference type="OrthoDB" id="27829at9989"/>
<dbReference type="PhylomeDB" id="Q923G5"/>
<dbReference type="TreeFam" id="TF319798"/>
<dbReference type="Reactome" id="R-RNO-9009391">
    <property type="pathway name" value="Extra-nuclear estrogen signaling"/>
</dbReference>
<dbReference type="PRO" id="PR:Q923G5"/>
<dbReference type="Proteomes" id="UP000002494">
    <property type="component" value="Chromosome 19"/>
</dbReference>
<dbReference type="Bgee" id="ENSRNOG00000017342">
    <property type="expression patterns" value="Expressed in duodenum and 19 other cell types or tissues"/>
</dbReference>
<dbReference type="GO" id="GO:0005783">
    <property type="term" value="C:endoplasmic reticulum"/>
    <property type="evidence" value="ECO:0000318"/>
    <property type="project" value="GO_Central"/>
</dbReference>
<dbReference type="GO" id="GO:0005794">
    <property type="term" value="C:Golgi apparatus"/>
    <property type="evidence" value="ECO:0000250"/>
    <property type="project" value="UniProtKB"/>
</dbReference>
<dbReference type="GO" id="GO:0000139">
    <property type="term" value="C:Golgi membrane"/>
    <property type="evidence" value="ECO:0007669"/>
    <property type="project" value="UniProtKB-SubCell"/>
</dbReference>
<dbReference type="GO" id="GO:0016409">
    <property type="term" value="F:palmitoyltransferase activity"/>
    <property type="evidence" value="ECO:0000266"/>
    <property type="project" value="RGD"/>
</dbReference>
<dbReference type="GO" id="GO:0019705">
    <property type="term" value="F:protein-cysteine S-myristoyltransferase activity"/>
    <property type="evidence" value="ECO:0007669"/>
    <property type="project" value="RHEA"/>
</dbReference>
<dbReference type="GO" id="GO:0019706">
    <property type="term" value="F:protein-cysteine S-palmitoyltransferase activity"/>
    <property type="evidence" value="ECO:0000250"/>
    <property type="project" value="UniProtKB"/>
</dbReference>
<dbReference type="GO" id="GO:0140439">
    <property type="term" value="F:protein-cysteine S-stearoyltransferase activity"/>
    <property type="evidence" value="ECO:0007669"/>
    <property type="project" value="RHEA"/>
</dbReference>
<dbReference type="GO" id="GO:0030521">
    <property type="term" value="P:androgen receptor signaling pathway"/>
    <property type="evidence" value="ECO:0000266"/>
    <property type="project" value="RGD"/>
</dbReference>
<dbReference type="GO" id="GO:0044381">
    <property type="term" value="P:glucose import in response to insulin stimulus"/>
    <property type="evidence" value="ECO:0000250"/>
    <property type="project" value="UniProtKB"/>
</dbReference>
<dbReference type="GO" id="GO:0009895">
    <property type="term" value="P:negative regulation of catabolic process"/>
    <property type="evidence" value="ECO:0000250"/>
    <property type="project" value="UniProtKB"/>
</dbReference>
<dbReference type="GO" id="GO:0018230">
    <property type="term" value="P:peptidyl-L-cysteine S-palmitoylation"/>
    <property type="evidence" value="ECO:0000250"/>
    <property type="project" value="UniProtKB"/>
</dbReference>
<dbReference type="GO" id="GO:0030859">
    <property type="term" value="P:polarized epithelial cell differentiation"/>
    <property type="evidence" value="ECO:0000250"/>
    <property type="project" value="UniProtKB"/>
</dbReference>
<dbReference type="GO" id="GO:0050847">
    <property type="term" value="P:progesterone receptor signaling pathway"/>
    <property type="evidence" value="ECO:0000266"/>
    <property type="project" value="RGD"/>
</dbReference>
<dbReference type="GO" id="GO:0072659">
    <property type="term" value="P:protein localization to plasma membrane"/>
    <property type="evidence" value="ECO:0000266"/>
    <property type="project" value="RGD"/>
</dbReference>
<dbReference type="GO" id="GO:0018345">
    <property type="term" value="P:protein palmitoylation"/>
    <property type="evidence" value="ECO:0000250"/>
    <property type="project" value="UniProtKB"/>
</dbReference>
<dbReference type="GO" id="GO:0006612">
    <property type="term" value="P:protein targeting to membrane"/>
    <property type="evidence" value="ECO:0000318"/>
    <property type="project" value="GO_Central"/>
</dbReference>
<dbReference type="GO" id="GO:1902044">
    <property type="term" value="P:regulation of Fas signaling pathway"/>
    <property type="evidence" value="ECO:0000250"/>
    <property type="project" value="UniProtKB"/>
</dbReference>
<dbReference type="GO" id="GO:0008277">
    <property type="term" value="P:regulation of G protein-coupled receptor signaling pathway"/>
    <property type="evidence" value="ECO:0000250"/>
    <property type="project" value="UniProtKB"/>
</dbReference>
<dbReference type="GO" id="GO:0150106">
    <property type="term" value="P:regulation of protein localization to cell-cell junction"/>
    <property type="evidence" value="ECO:0000250"/>
    <property type="project" value="UniProtKB"/>
</dbReference>
<dbReference type="GO" id="GO:1903076">
    <property type="term" value="P:regulation of protein localization to plasma membrane"/>
    <property type="evidence" value="ECO:0000250"/>
    <property type="project" value="UniProtKB"/>
</dbReference>
<dbReference type="GO" id="GO:0043401">
    <property type="term" value="P:steroid hormone receptor signaling pathway"/>
    <property type="evidence" value="ECO:0000266"/>
    <property type="project" value="RGD"/>
</dbReference>
<dbReference type="InterPro" id="IPR001594">
    <property type="entry name" value="Palmitoyltrfase_DHHC"/>
</dbReference>
<dbReference type="InterPro" id="IPR039859">
    <property type="entry name" value="PFA4/ZDH16/20/ERF2-like"/>
</dbReference>
<dbReference type="PANTHER" id="PTHR12246">
    <property type="entry name" value="PALMITOYLTRANSFERASE ZDHHC16"/>
    <property type="match status" value="1"/>
</dbReference>
<dbReference type="Pfam" id="PF01529">
    <property type="entry name" value="DHHC"/>
    <property type="match status" value="1"/>
</dbReference>
<dbReference type="PROSITE" id="PS50216">
    <property type="entry name" value="DHHC"/>
    <property type="match status" value="1"/>
</dbReference>
<evidence type="ECO:0000250" key="1">
    <source>
        <dbReference type="UniProtKB" id="Q8IUH5"/>
    </source>
</evidence>
<evidence type="ECO:0000250" key="2">
    <source>
        <dbReference type="UniProtKB" id="Q91WU6"/>
    </source>
</evidence>
<evidence type="ECO:0000250" key="3">
    <source>
        <dbReference type="UniProtKB" id="Q9NXF8"/>
    </source>
</evidence>
<evidence type="ECO:0000255" key="4"/>
<evidence type="ECO:0000255" key="5">
    <source>
        <dbReference type="PROSITE-ProRule" id="PRU00067"/>
    </source>
</evidence>
<evidence type="ECO:0000269" key="6">
    <source>
    </source>
</evidence>
<evidence type="ECO:0000303" key="7">
    <source>
    </source>
</evidence>
<evidence type="ECO:0000305" key="8"/>
<evidence type="ECO:0000312" key="9">
    <source>
        <dbReference type="EMBL" id="AAX73387.1"/>
    </source>
</evidence>
<evidence type="ECO:0000312" key="10">
    <source>
        <dbReference type="RGD" id="620205"/>
    </source>
</evidence>
<keyword id="KW-0012">Acyltransferase</keyword>
<keyword id="KW-0333">Golgi apparatus</keyword>
<keyword id="KW-0449">Lipoprotein</keyword>
<keyword id="KW-0472">Membrane</keyword>
<keyword id="KW-0564">Palmitate</keyword>
<keyword id="KW-1185">Reference proteome</keyword>
<keyword id="KW-0808">Transferase</keyword>
<keyword id="KW-0812">Transmembrane</keyword>
<keyword id="KW-1133">Transmembrane helix</keyword>
<protein>
    <recommendedName>
        <fullName evidence="8">Palmitoyltransferase ZDHHC7</fullName>
        <ecNumber evidence="2">2.3.1.225</ecNumber>
    </recommendedName>
    <alternativeName>
        <fullName evidence="2">Acyltransferase ZDHHC7</fullName>
        <ecNumber evidence="2">2.3.1.-</ecNumber>
    </alternativeName>
    <alternativeName>
        <fullName evidence="7">Sertoli cell gene with a zinc finger domain protein</fullName>
    </alternativeName>
    <alternativeName>
        <fullName evidence="10">Zinc finger DHHC domain-containing protein 7</fullName>
        <shortName evidence="9">DHHC7</shortName>
    </alternativeName>
</protein>
<proteinExistence type="evidence at protein level"/>
<accession>Q923G5</accession>
<accession>Q2TGK0</accession>
<organism>
    <name type="scientific">Rattus norvegicus</name>
    <name type="common">Rat</name>
    <dbReference type="NCBI Taxonomy" id="10116"/>
    <lineage>
        <taxon>Eukaryota</taxon>
        <taxon>Metazoa</taxon>
        <taxon>Chordata</taxon>
        <taxon>Craniata</taxon>
        <taxon>Vertebrata</taxon>
        <taxon>Euteleostomi</taxon>
        <taxon>Mammalia</taxon>
        <taxon>Eutheria</taxon>
        <taxon>Euarchontoglires</taxon>
        <taxon>Glires</taxon>
        <taxon>Rodentia</taxon>
        <taxon>Myomorpha</taxon>
        <taxon>Muroidea</taxon>
        <taxon>Muridae</taxon>
        <taxon>Murinae</taxon>
        <taxon>Rattus</taxon>
    </lineage>
</organism>
<name>ZDHC7_RAT</name>
<comment type="function">
    <text evidence="2 3 6">Golgi-localized palmitoyltransferase that catalyzes the addition of palmitate onto various protein substrates and therefore functions in several unrelated biological processes. Has no stringent fatty acid selectivity and in addition to palmitate can also transfer onto target proteins myristate from tetradecanoyl-CoA and stearate from octadecanoyl-CoA (By similarity). Palmitoylates sex steroid hormone receptors, including ESR1, PGR and AR, thereby regulating their targeting to the plasma membrane and their function in rapid intracellular signaling upon binding of sex hormones. Palmitoylates GNAQ, a heterotrimeric G protein, regulating its dynamic localization at the plasma membrane and is thereby involved in GNAQ-dependent G protein-coupled receptor signaling pathways. Also functions in ligand-induced cell death by regulating the FAS signaling pathway through the palmitoylation and stabilization of the receptor at the plasma membrane. In epithelial cells, palmitoylates SCRIB and regulates its localization to the plasma membrane, regulating indirectly cell polarity and differentiation. Also palmitoylates JAM3 and promotes its expression at tight junctions and regulates its function in cell migration (By similarity). Palmitoylates the glucose transporter GLUT4/SLC2A4 and controls the insulin-dependent translocation of GLUT4 to the plasma membrane. In brain, could also palmitoylate SNAP25 and DLG4/PSD95. Could also palmitoylate DNAJC5 and regulate its localization to the Golgi membrane. Could also palmitoylate NCDN (By similarity). May play a role in follicle stimulation hormone (FSH) activation of testicular Sertoli cells (PubMed:11796495). Activates pyroptosis by catalyzing palmitoylation of gasdermin-D (GSDMD) (By similarity).</text>
</comment>
<comment type="catalytic activity">
    <reaction evidence="2">
        <text>L-cysteinyl-[protein] + hexadecanoyl-CoA = S-hexadecanoyl-L-cysteinyl-[protein] + CoA</text>
        <dbReference type="Rhea" id="RHEA:36683"/>
        <dbReference type="Rhea" id="RHEA-COMP:10131"/>
        <dbReference type="Rhea" id="RHEA-COMP:11032"/>
        <dbReference type="ChEBI" id="CHEBI:29950"/>
        <dbReference type="ChEBI" id="CHEBI:57287"/>
        <dbReference type="ChEBI" id="CHEBI:57379"/>
        <dbReference type="ChEBI" id="CHEBI:74151"/>
        <dbReference type="EC" id="2.3.1.225"/>
    </reaction>
    <physiologicalReaction direction="left-to-right" evidence="2">
        <dbReference type="Rhea" id="RHEA:36684"/>
    </physiologicalReaction>
</comment>
<comment type="catalytic activity">
    <reaction evidence="2">
        <text>L-cysteinyl-[protein] + tetradecanoyl-CoA = S-tetradecanoyl-L-cysteinyl-[protein] + CoA</text>
        <dbReference type="Rhea" id="RHEA:59736"/>
        <dbReference type="Rhea" id="RHEA-COMP:10131"/>
        <dbReference type="Rhea" id="RHEA-COMP:15433"/>
        <dbReference type="ChEBI" id="CHEBI:29950"/>
        <dbReference type="ChEBI" id="CHEBI:57287"/>
        <dbReference type="ChEBI" id="CHEBI:57385"/>
        <dbReference type="ChEBI" id="CHEBI:143199"/>
    </reaction>
    <physiologicalReaction direction="left-to-right" evidence="2">
        <dbReference type="Rhea" id="RHEA:59737"/>
    </physiologicalReaction>
</comment>
<comment type="catalytic activity">
    <reaction evidence="2">
        <text>L-cysteinyl-[protein] + octadecanoyl-CoA = S-octadecanoyl-L-cysteinyl-[protein] + CoA</text>
        <dbReference type="Rhea" id="RHEA:59740"/>
        <dbReference type="Rhea" id="RHEA-COMP:10131"/>
        <dbReference type="Rhea" id="RHEA-COMP:15434"/>
        <dbReference type="ChEBI" id="CHEBI:29950"/>
        <dbReference type="ChEBI" id="CHEBI:57287"/>
        <dbReference type="ChEBI" id="CHEBI:57394"/>
        <dbReference type="ChEBI" id="CHEBI:143200"/>
    </reaction>
    <physiologicalReaction direction="left-to-right" evidence="2">
        <dbReference type="Rhea" id="RHEA:59741"/>
    </physiologicalReaction>
</comment>
<comment type="subunit">
    <text evidence="2">Homooligomers. Heterooligomers with ZDHHC3.</text>
</comment>
<comment type="subcellular location">
    <subcellularLocation>
        <location evidence="3">Golgi apparatus membrane</location>
        <topology evidence="4">Multi-pass membrane protein</topology>
    </subcellularLocation>
</comment>
<comment type="tissue specificity">
    <text evidence="6">Widely expressed. Present in Sertoli cells (at protein level).</text>
</comment>
<comment type="domain">
    <text evidence="1">The DHHC domain is required for palmitoyltransferase activity.</text>
</comment>
<comment type="PTM">
    <text evidence="2">Autopalmitoylated.</text>
</comment>
<comment type="similarity">
    <text evidence="8">Belongs to the DHHC palmitoyltransferase family.</text>
</comment>